<name>COPA_ENTHA</name>
<proteinExistence type="evidence at protein level"/>
<evidence type="ECO:0000250" key="1"/>
<evidence type="ECO:0000255" key="2"/>
<evidence type="ECO:0000255" key="3">
    <source>
        <dbReference type="PROSITE-ProRule" id="PRU00280"/>
    </source>
</evidence>
<evidence type="ECO:0000269" key="4">
    <source>
    </source>
</evidence>
<evidence type="ECO:0000269" key="5">
    <source>
    </source>
</evidence>
<evidence type="ECO:0000269" key="6">
    <source>
    </source>
</evidence>
<evidence type="ECO:0000269" key="7">
    <source>
    </source>
</evidence>
<evidence type="ECO:0000305" key="8"/>
<keyword id="KW-0067">ATP-binding</keyword>
<keyword id="KW-1003">Cell membrane</keyword>
<keyword id="KW-0186">Copper</keyword>
<keyword id="KW-0187">Copper transport</keyword>
<keyword id="KW-0406">Ion transport</keyword>
<keyword id="KW-0460">Magnesium</keyword>
<keyword id="KW-0472">Membrane</keyword>
<keyword id="KW-0479">Metal-binding</keyword>
<keyword id="KW-0547">Nucleotide-binding</keyword>
<keyword id="KW-0597">Phosphoprotein</keyword>
<keyword id="KW-1278">Translocase</keyword>
<keyword id="KW-0812">Transmembrane</keyword>
<keyword id="KW-1133">Transmembrane helix</keyword>
<keyword id="KW-0813">Transport</keyword>
<dbReference type="EC" id="7.2.2.8" evidence="4"/>
<dbReference type="EMBL" id="L13292">
    <property type="protein sequence ID" value="AAA61835.1"/>
    <property type="molecule type" value="Genomic_DNA"/>
</dbReference>
<dbReference type="EMBL" id="CP003504">
    <property type="protein sequence ID" value="AFM70729.1"/>
    <property type="molecule type" value="Genomic_DNA"/>
</dbReference>
<dbReference type="EMBL" id="Z46807">
    <property type="protein sequence ID" value="CAA86837.1"/>
    <property type="molecule type" value="Genomic_DNA"/>
</dbReference>
<dbReference type="PIR" id="A45995">
    <property type="entry name" value="A45995"/>
</dbReference>
<dbReference type="RefSeq" id="WP_010737925.1">
    <property type="nucleotide sequence ID" value="NC_018081.1"/>
</dbReference>
<dbReference type="SMR" id="P32113"/>
<dbReference type="TCDB" id="3.A.3.5.1">
    <property type="family name" value="the p-type atpase (p-atpase) superfamily"/>
</dbReference>
<dbReference type="KEGG" id="ehr:EHR_09085"/>
<dbReference type="eggNOG" id="COG2217">
    <property type="taxonomic scope" value="Bacteria"/>
</dbReference>
<dbReference type="HOGENOM" id="CLU_001771_0_3_9"/>
<dbReference type="OrthoDB" id="9813266at2"/>
<dbReference type="SABIO-RK" id="P32113"/>
<dbReference type="Proteomes" id="UP000002895">
    <property type="component" value="Chromosome"/>
</dbReference>
<dbReference type="GO" id="GO:0005886">
    <property type="term" value="C:plasma membrane"/>
    <property type="evidence" value="ECO:0007669"/>
    <property type="project" value="UniProtKB-SubCell"/>
</dbReference>
<dbReference type="GO" id="GO:0005524">
    <property type="term" value="F:ATP binding"/>
    <property type="evidence" value="ECO:0007669"/>
    <property type="project" value="UniProtKB-KW"/>
</dbReference>
<dbReference type="GO" id="GO:0016887">
    <property type="term" value="F:ATP hydrolysis activity"/>
    <property type="evidence" value="ECO:0007669"/>
    <property type="project" value="InterPro"/>
</dbReference>
<dbReference type="GO" id="GO:0005507">
    <property type="term" value="F:copper ion binding"/>
    <property type="evidence" value="ECO:0007669"/>
    <property type="project" value="TreeGrafter"/>
</dbReference>
<dbReference type="GO" id="GO:0043682">
    <property type="term" value="F:P-type divalent copper transporter activity"/>
    <property type="evidence" value="ECO:0007669"/>
    <property type="project" value="TreeGrafter"/>
</dbReference>
<dbReference type="GO" id="GO:0140581">
    <property type="term" value="F:P-type monovalent copper transporter activity"/>
    <property type="evidence" value="ECO:0007669"/>
    <property type="project" value="UniProtKB-EC"/>
</dbReference>
<dbReference type="GO" id="GO:0055070">
    <property type="term" value="P:copper ion homeostasis"/>
    <property type="evidence" value="ECO:0007669"/>
    <property type="project" value="TreeGrafter"/>
</dbReference>
<dbReference type="CDD" id="cd00371">
    <property type="entry name" value="HMA"/>
    <property type="match status" value="1"/>
</dbReference>
<dbReference type="CDD" id="cd02094">
    <property type="entry name" value="P-type_ATPase_Cu-like"/>
    <property type="match status" value="1"/>
</dbReference>
<dbReference type="FunFam" id="3.30.70.100:FF:000005">
    <property type="entry name" value="Copper-exporting P-type ATPase A"/>
    <property type="match status" value="1"/>
</dbReference>
<dbReference type="FunFam" id="2.70.150.10:FF:000002">
    <property type="entry name" value="Copper-transporting ATPase 1, putative"/>
    <property type="match status" value="1"/>
</dbReference>
<dbReference type="FunFam" id="3.40.50.1000:FF:000020">
    <property type="entry name" value="Probable cation-transporting P-type ATPase"/>
    <property type="match status" value="1"/>
</dbReference>
<dbReference type="Gene3D" id="3.30.70.100">
    <property type="match status" value="1"/>
</dbReference>
<dbReference type="Gene3D" id="3.40.1110.10">
    <property type="entry name" value="Calcium-transporting ATPase, cytoplasmic domain N"/>
    <property type="match status" value="1"/>
</dbReference>
<dbReference type="Gene3D" id="2.70.150.10">
    <property type="entry name" value="Calcium-transporting ATPase, cytoplasmic transduction domain A"/>
    <property type="match status" value="1"/>
</dbReference>
<dbReference type="Gene3D" id="3.40.50.1000">
    <property type="entry name" value="HAD superfamily/HAD-like"/>
    <property type="match status" value="1"/>
</dbReference>
<dbReference type="InterPro" id="IPR023299">
    <property type="entry name" value="ATPase_P-typ_cyto_dom_N"/>
</dbReference>
<dbReference type="InterPro" id="IPR018303">
    <property type="entry name" value="ATPase_P-typ_P_site"/>
</dbReference>
<dbReference type="InterPro" id="IPR023298">
    <property type="entry name" value="ATPase_P-typ_TM_dom_sf"/>
</dbReference>
<dbReference type="InterPro" id="IPR008250">
    <property type="entry name" value="ATPase_P-typ_transduc_dom_A_sf"/>
</dbReference>
<dbReference type="InterPro" id="IPR036412">
    <property type="entry name" value="HAD-like_sf"/>
</dbReference>
<dbReference type="InterPro" id="IPR023214">
    <property type="entry name" value="HAD_sf"/>
</dbReference>
<dbReference type="InterPro" id="IPR017969">
    <property type="entry name" value="Heavy-metal-associated_CS"/>
</dbReference>
<dbReference type="InterPro" id="IPR006121">
    <property type="entry name" value="HMA_dom"/>
</dbReference>
<dbReference type="InterPro" id="IPR036163">
    <property type="entry name" value="HMA_dom_sf"/>
</dbReference>
<dbReference type="InterPro" id="IPR027256">
    <property type="entry name" value="P-typ_ATPase_IB"/>
</dbReference>
<dbReference type="InterPro" id="IPR001757">
    <property type="entry name" value="P_typ_ATPase"/>
</dbReference>
<dbReference type="InterPro" id="IPR044492">
    <property type="entry name" value="P_typ_ATPase_HD_dom"/>
</dbReference>
<dbReference type="NCBIfam" id="TIGR01511">
    <property type="entry name" value="ATPase-IB1_Cu"/>
    <property type="match status" value="1"/>
</dbReference>
<dbReference type="NCBIfam" id="TIGR01525">
    <property type="entry name" value="ATPase-IB_hvy"/>
    <property type="match status" value="1"/>
</dbReference>
<dbReference type="NCBIfam" id="TIGR01494">
    <property type="entry name" value="ATPase_P-type"/>
    <property type="match status" value="1"/>
</dbReference>
<dbReference type="PANTHER" id="PTHR43520">
    <property type="entry name" value="ATP7, ISOFORM B"/>
    <property type="match status" value="1"/>
</dbReference>
<dbReference type="PANTHER" id="PTHR43520:SF8">
    <property type="entry name" value="P-TYPE CU(+) TRANSPORTER"/>
    <property type="match status" value="1"/>
</dbReference>
<dbReference type="Pfam" id="PF00122">
    <property type="entry name" value="E1-E2_ATPase"/>
    <property type="match status" value="1"/>
</dbReference>
<dbReference type="Pfam" id="PF00403">
    <property type="entry name" value="HMA"/>
    <property type="match status" value="1"/>
</dbReference>
<dbReference type="Pfam" id="PF00702">
    <property type="entry name" value="Hydrolase"/>
    <property type="match status" value="1"/>
</dbReference>
<dbReference type="PRINTS" id="PR00119">
    <property type="entry name" value="CATATPASE"/>
</dbReference>
<dbReference type="PRINTS" id="PR00943">
    <property type="entry name" value="CUATPASE"/>
</dbReference>
<dbReference type="PRINTS" id="PR00942">
    <property type="entry name" value="CUATPASEI"/>
</dbReference>
<dbReference type="SFLD" id="SFLDS00003">
    <property type="entry name" value="Haloacid_Dehalogenase"/>
    <property type="match status" value="1"/>
</dbReference>
<dbReference type="SFLD" id="SFLDF00027">
    <property type="entry name" value="p-type_atpase"/>
    <property type="match status" value="1"/>
</dbReference>
<dbReference type="SUPFAM" id="SSF81653">
    <property type="entry name" value="Calcium ATPase, transduction domain A"/>
    <property type="match status" value="1"/>
</dbReference>
<dbReference type="SUPFAM" id="SSF81665">
    <property type="entry name" value="Calcium ATPase, transmembrane domain M"/>
    <property type="match status" value="1"/>
</dbReference>
<dbReference type="SUPFAM" id="SSF56784">
    <property type="entry name" value="HAD-like"/>
    <property type="match status" value="1"/>
</dbReference>
<dbReference type="SUPFAM" id="SSF55008">
    <property type="entry name" value="HMA, heavy metal-associated domain"/>
    <property type="match status" value="1"/>
</dbReference>
<dbReference type="PROSITE" id="PS00154">
    <property type="entry name" value="ATPASE_E1_E2"/>
    <property type="match status" value="1"/>
</dbReference>
<dbReference type="PROSITE" id="PS01047">
    <property type="entry name" value="HMA_1"/>
    <property type="match status" value="1"/>
</dbReference>
<dbReference type="PROSITE" id="PS50846">
    <property type="entry name" value="HMA_2"/>
    <property type="match status" value="1"/>
</dbReference>
<comment type="function">
    <text evidence="4 7">Probably involved in copper import under copper limiting conditions.</text>
</comment>
<comment type="catalytic activity">
    <reaction evidence="4">
        <text>Cu(+)(in) + ATP + H2O = Cu(+)(out) + ADP + phosphate + H(+)</text>
        <dbReference type="Rhea" id="RHEA:25792"/>
        <dbReference type="ChEBI" id="CHEBI:15377"/>
        <dbReference type="ChEBI" id="CHEBI:15378"/>
        <dbReference type="ChEBI" id="CHEBI:30616"/>
        <dbReference type="ChEBI" id="CHEBI:43474"/>
        <dbReference type="ChEBI" id="CHEBI:49552"/>
        <dbReference type="ChEBI" id="CHEBI:456216"/>
        <dbReference type="EC" id="7.2.2.8"/>
    </reaction>
</comment>
<comment type="activity regulation">
    <text evidence="4">Inhibited by vanadate.</text>
</comment>
<comment type="biophysicochemical properties">
    <kinetics>
        <KM evidence="4">0.2 mM for ATP</KM>
        <Vmax evidence="4">0.15 umol/min/mg enzyme</Vmax>
    </kinetics>
    <phDependence>
        <text evidence="4">Optimum pH is 6.25.</text>
    </phDependence>
</comment>
<comment type="subunit">
    <text evidence="5">Monomer. Interacts with the copper chaperone CopZ.</text>
</comment>
<comment type="subcellular location">
    <subcellularLocation>
        <location>Cell membrane</location>
        <topology>Multi-pass membrane protein</topology>
    </subcellularLocation>
</comment>
<comment type="induction">
    <text evidence="6">By copper and silver.</text>
</comment>
<comment type="similarity">
    <text evidence="8">Belongs to the cation transport ATPase (P-type) (TC 3.A.3) family. Type IB subfamily.</text>
</comment>
<protein>
    <recommendedName>
        <fullName>Probable copper-importing P-type ATPase A</fullName>
        <ecNumber evidence="4">7.2.2.8</ecNumber>
    </recommendedName>
</protein>
<reference key="1">
    <citation type="journal article" date="1993" name="J. Biol. Chem.">
        <title>Primary structure of two P-type ATPases involved in copper homeostasis in Enterococcus hirae.</title>
        <authorList>
            <person name="Odermatt A."/>
            <person name="Suter H."/>
            <person name="Krapf R."/>
            <person name="Solioz M."/>
        </authorList>
    </citation>
    <scope>NUCLEOTIDE SEQUENCE [GENOMIC DNA]</scope>
    <scope>FUNCTION IN COPPER HOMEOSTASIS</scope>
    <source>
        <strain>ATCC 9790 / DSM 20160 / JCM 8729 / LMG 6399 / NBRC 3181 / NCIMB 6459 / NCDO 1258 / NCTC 12367 / WDCM 00089 / R</strain>
    </source>
</reference>
<reference key="2">
    <citation type="journal article" date="2012" name="J. Bacteriol.">
        <title>Genome sequence of Enterococcus hirae (Streptococcus faecalis) ATCC 9790, a model organism for the study of ion transport, bioenergetics, and copper homeostasis.</title>
        <authorList>
            <person name="Gaechter T."/>
            <person name="Wunderlin C."/>
            <person name="Schmidheini T."/>
            <person name="Solioz M."/>
        </authorList>
    </citation>
    <scope>NUCLEOTIDE SEQUENCE [LARGE SCALE GENOMIC DNA]</scope>
    <source>
        <strain>ATCC 9790 / DSM 20160 / JCM 8729 / LMG 6399 / NBRC 3181 / NCIMB 6459 / NCDO 1258 / NCTC 12367 / WDCM 00089 / R</strain>
    </source>
</reference>
<reference key="3">
    <citation type="journal article" date="1995" name="J. Biol. Chem.">
        <title>Two trans-acting metalloregulatory proteins controlling expression of the copper-ATPases of Enterococcus hirae.</title>
        <authorList>
            <person name="Odermatt A."/>
            <person name="Solioz M."/>
        </authorList>
    </citation>
    <scope>NUCLEOTIDE SEQUENCE [GENOMIC DNA] OF 1-9</scope>
    <source>
        <strain>ATCC 9790 / DSM 20160 / JCM 8729 / LMG 6399 / NBRC 3181 / NCIMB 6459 / NCDO 1258 / NCTC 12367 / WDCM 00089 / R</strain>
    </source>
</reference>
<reference key="4">
    <citation type="journal article" date="1994" name="Biochem. Biophys. Res. Commun.">
        <title>Induction of the putative copper ATPases, CopA and CopB, of Enterococcus hirae by Ag+ and Cu2+, and Ag+ extrusion by CopB.</title>
        <authorList>
            <person name="Odermatt A."/>
            <person name="Krapf R."/>
            <person name="Solioz M."/>
        </authorList>
    </citation>
    <scope>INDUCTION BY COPPER AND SILVER</scope>
    <source>
        <strain>ATCC 9790 / DSM 20160 / JCM 8729 / LMG 6399 / NBRC 3181 / NCIMB 6459 / NCDO 1258 / NCTC 12367 / WDCM 00089 / R</strain>
    </source>
</reference>
<reference key="5">
    <citation type="journal article" date="2001" name="Biochem. Biophys. Res. Commun.">
        <title>Interaction of the CopZ copper chaperone with the CopA copper ATPase of Enterococcus hirae assessed by surface plasmon resonance.</title>
        <authorList>
            <person name="Multhaup G."/>
            <person name="Strausak D."/>
            <person name="Bissig K.-D."/>
            <person name="Solioz M."/>
        </authorList>
    </citation>
    <scope>INTERACTION WITH COPZ</scope>
    <scope>MUTAGENESIS OF CYS-17 AND CYS-20</scope>
    <source>
        <strain>ATCC 9790 / DSM 20160 / JCM 8729 / LMG 6399 / NBRC 3181 / NCIMB 6459 / NCDO 1258 / NCTC 12367 / WDCM 00089 / R</strain>
    </source>
</reference>
<reference key="6">
    <citation type="journal article" date="2001" name="Biochem. Biophys. Res. Commun.">
        <title>Purification and functional analysis of the copper ATPase CopA of Enterococcus hirae.</title>
        <authorList>
            <person name="Wunderli-Ye H."/>
            <person name="Solioz M."/>
        </authorList>
    </citation>
    <scope>FUNCTION AS A COPPER ATPASE</scope>
    <scope>CATALYTIC ACTIVITY</scope>
    <scope>ACYLPHOSPHATE FORMATION</scope>
    <scope>BIOPHYSICOCHEMICAL PROPERTIES</scope>
    <scope>ACTIVITY REGULATION</scope>
    <source>
        <strain>ATCC 9790 / DSM 20160 / JCM 8729 / LMG 6399 / NBRC 3181 / NCIMB 6459 / NCDO 1258 / NCTC 12367 / WDCM 00089 / R</strain>
    </source>
</reference>
<accession>P32113</accession>
<accession>I6TBM0</accession>
<accession>Q47841</accession>
<feature type="chain" id="PRO_0000046250" description="Probable copper-importing P-type ATPase A">
    <location>
        <begin position="1"/>
        <end position="727"/>
    </location>
</feature>
<feature type="topological domain" description="Cytoplasmic" evidence="2">
    <location>
        <begin position="1"/>
        <end position="94"/>
    </location>
</feature>
<feature type="transmembrane region" description="Helical" evidence="2">
    <location>
        <begin position="95"/>
        <end position="115"/>
    </location>
</feature>
<feature type="topological domain" description="Extracellular" evidence="2">
    <location>
        <begin position="116"/>
        <end position="119"/>
    </location>
</feature>
<feature type="transmembrane region" description="Helical" evidence="2">
    <location>
        <begin position="120"/>
        <end position="137"/>
    </location>
</feature>
<feature type="topological domain" description="Cytoplasmic" evidence="2">
    <location>
        <begin position="138"/>
        <end position="161"/>
    </location>
</feature>
<feature type="transmembrane region" description="Helical" evidence="2">
    <location>
        <begin position="162"/>
        <end position="181"/>
    </location>
</feature>
<feature type="topological domain" description="Extracellular" evidence="2">
    <location>
        <begin position="182"/>
        <end position="187"/>
    </location>
</feature>
<feature type="transmembrane region" description="Helical" evidence="2">
    <location>
        <begin position="188"/>
        <end position="203"/>
    </location>
</feature>
<feature type="topological domain" description="Cytoplasmic" evidence="2">
    <location>
        <begin position="204"/>
        <end position="341"/>
    </location>
</feature>
<feature type="transmembrane region" description="Helical" evidence="2">
    <location>
        <begin position="342"/>
        <end position="362"/>
    </location>
</feature>
<feature type="topological domain" description="Extracellular" evidence="2">
    <location>
        <begin position="363"/>
        <end position="375"/>
    </location>
</feature>
<feature type="transmembrane region" description="Helical" evidence="2">
    <location>
        <begin position="376"/>
        <end position="396"/>
    </location>
</feature>
<feature type="topological domain" description="Cytoplasmic" evidence="2">
    <location>
        <begin position="397"/>
        <end position="678"/>
    </location>
</feature>
<feature type="transmembrane region" description="Helical" evidence="2">
    <location>
        <begin position="679"/>
        <end position="698"/>
    </location>
</feature>
<feature type="topological domain" description="Extracellular" evidence="2">
    <location>
        <begin position="699"/>
        <end position="700"/>
    </location>
</feature>
<feature type="transmembrane region" description="Helical" evidence="2">
    <location>
        <begin position="701"/>
        <end position="721"/>
    </location>
</feature>
<feature type="topological domain" description="Cytoplasmic" evidence="2">
    <location>
        <begin position="722"/>
        <end position="727"/>
    </location>
</feature>
<feature type="domain" description="HMA" evidence="3">
    <location>
        <begin position="6"/>
        <end position="70"/>
    </location>
</feature>
<feature type="active site" description="4-aspartylphosphate intermediate" evidence="1">
    <location>
        <position position="425"/>
    </location>
</feature>
<feature type="binding site" evidence="3">
    <location>
        <position position="17"/>
    </location>
    <ligand>
        <name>Cu(+)</name>
        <dbReference type="ChEBI" id="CHEBI:49552"/>
    </ligand>
</feature>
<feature type="binding site" evidence="3">
    <location>
        <position position="20"/>
    </location>
    <ligand>
        <name>Cu(+)</name>
        <dbReference type="ChEBI" id="CHEBI:49552"/>
    </ligand>
</feature>
<feature type="binding site">
    <location>
        <position position="621"/>
    </location>
    <ligand>
        <name>Mg(2+)</name>
        <dbReference type="ChEBI" id="CHEBI:18420"/>
    </ligand>
</feature>
<feature type="binding site">
    <location>
        <position position="625"/>
    </location>
    <ligand>
        <name>Mg(2+)</name>
        <dbReference type="ChEBI" id="CHEBI:18420"/>
    </ligand>
</feature>
<feature type="mutagenesis site" description="Still strongly interacts with CopZ but abolishes the modulating activity of copper; when associated with S-20." evidence="5">
    <original>C</original>
    <variation>S</variation>
    <location>
        <position position="17"/>
    </location>
</feature>
<feature type="mutagenesis site" description="Still strongly interacts with CopZ but abolishes the modulating activity of copper; when associated with S-17." evidence="5">
    <original>C</original>
    <variation>S</variation>
    <location>
        <position position="20"/>
    </location>
</feature>
<feature type="sequence conflict" description="In Ref. 1; AAA61835." evidence="8" ref="1">
    <original>A</original>
    <variation>R</variation>
    <location>
        <position position="630"/>
    </location>
</feature>
<sequence length="727" mass="78303">MATNTKMETFVITGMTCANCSARIEKELNEQPGVMSATVNLATEKASVKYTDTTTERLIKSVENIGYGAILYDEAHKQKIAEEKQTYLRKMKFDLIFSAILTLPLMLAMIAMMLGSHGPIVSFFHLSLVQLLFALPVQFYVGWRFYKGAYHALKTKAPNMDVLVAIGTSAAFALSIYNGFFPSHSHDLYFESSSMIITLILLGKYLEHTAKSKTGDAIKQMMSLQTKTAQVLRDGKEETIAIDEVMIDDILVIRPGEQVPTDGRIIAGTSALDESMLTGESVPVEKKEKDMVFGGTINTNGLIQIQVSQIGKDTVLAQIIQMVEDAQGSKAPIQQIADKISGIFVPIVLFLALVTLLVTGWLTKDWQLALLHSVSVLVIACPCALGLATPTAIMVGTGVGAHNGILIKGGEALEGAAHLNSIILDKTGTITQGRPEVTDVIGPKEIISLFYSLEHASEHPLGKAIVAYGAKVGAKTQPITDFVAHPGAGISGTINGVHYFAGTRKRLAEMNLSFDEFQEQALELEQAGKTVMFLANEEQVLGMIAVADQIKEDAKQAIEQLQQKGVDVFMVTGDNQRAAQAIGKQVGIDSDHIFAEVLPEEKANYVEKLQKAGKKVGMVGDGINDAPALALADVGIAMGSGTDIAMETADVTLMNSHLTSINQMISLSAATLKKIKQNLFWAFIYNTIGIPFAAFGFLNPIIAGGAMAFSSISVLLNSLSLNRKTIK</sequence>
<organism>
    <name type="scientific">Enterococcus hirae (strain ATCC 9790 / DSM 20160 / JCM 8729 / LMG 6399 / NBRC 3181 / NCIMB 6459 / NCDO 1258 / NCTC 12367 / WDCM 00089 / R)</name>
    <dbReference type="NCBI Taxonomy" id="768486"/>
    <lineage>
        <taxon>Bacteria</taxon>
        <taxon>Bacillati</taxon>
        <taxon>Bacillota</taxon>
        <taxon>Bacilli</taxon>
        <taxon>Lactobacillales</taxon>
        <taxon>Enterococcaceae</taxon>
        <taxon>Enterococcus</taxon>
    </lineage>
</organism>
<gene>
    <name type="primary">copA</name>
    <name type="ordered locus">EHR_09085</name>
</gene>